<organism>
    <name type="scientific">Bacillus pumilus</name>
    <name type="common">Bacillus mesentericus</name>
    <dbReference type="NCBI Taxonomy" id="1408"/>
    <lineage>
        <taxon>Bacteria</taxon>
        <taxon>Bacillati</taxon>
        <taxon>Bacillota</taxon>
        <taxon>Bacilli</taxon>
        <taxon>Bacillales</taxon>
        <taxon>Bacillaceae</taxon>
        <taxon>Bacillus</taxon>
    </lineage>
</organism>
<reference key="1">
    <citation type="journal article" date="1990" name="Gene">
        <title>The structure of the trpE, trpD and 5' trpC genes of Bacillus pumilus.</title>
        <authorList>
            <person name="Rivas M.V."/>
            <person name="Jarvis E.D."/>
            <person name="Rudner R."/>
        </authorList>
    </citation>
    <scope>NUCLEOTIDE SEQUENCE [GENOMIC DNA]</scope>
    <source>
        <strain>RUB502</strain>
    </source>
</reference>
<reference key="2">
    <citation type="journal article" date="1990" name="Gene">
        <authorList>
            <person name="Rivas M.V."/>
            <person name="Jarvis E.D."/>
            <person name="Rudner R."/>
        </authorList>
    </citation>
    <scope>ERRATUM OF PUBMED:2110100</scope>
</reference>
<accession>P18267</accession>
<comment type="function">
    <text evidence="1">Part of a heterotetrameric complex that catalyzes the two-step biosynthesis of anthranilate, an intermediate in the biosynthesis of L-tryptophan. In the first step, the glutamine-binding beta subunit (TrpG) of anthranilate synthase (AS) provides the glutamine amidotransferase activity which generates ammonia as a substrate that, along with chorismate, is used in the second step, catalyzed by the large alpha subunit of AS (TrpE) to produce anthranilate. In the absence of TrpG, TrpE can synthesize anthranilate directly from chorismate and high concentrations of ammonia (By similarity).</text>
</comment>
<comment type="catalytic activity">
    <reaction>
        <text>chorismate + L-glutamine = anthranilate + pyruvate + L-glutamate + H(+)</text>
        <dbReference type="Rhea" id="RHEA:21732"/>
        <dbReference type="ChEBI" id="CHEBI:15361"/>
        <dbReference type="ChEBI" id="CHEBI:15378"/>
        <dbReference type="ChEBI" id="CHEBI:16567"/>
        <dbReference type="ChEBI" id="CHEBI:29748"/>
        <dbReference type="ChEBI" id="CHEBI:29985"/>
        <dbReference type="ChEBI" id="CHEBI:58359"/>
        <dbReference type="EC" id="4.1.3.27"/>
    </reaction>
</comment>
<comment type="cofactor">
    <cofactor evidence="2">
        <name>Mg(2+)</name>
        <dbReference type="ChEBI" id="CHEBI:18420"/>
    </cofactor>
    <text evidence="2">Binds 1 Mg(2+) ion per subunit.</text>
</comment>
<comment type="activity regulation">
    <text evidence="1">Feedback inhibited by tryptophan.</text>
</comment>
<comment type="pathway">
    <text>Amino-acid biosynthesis; L-tryptophan biosynthesis; L-tryptophan from chorismate: step 1/5.</text>
</comment>
<comment type="subunit">
    <text evidence="1">Heterotetramer consisting of two non-identical subunits: a beta subunit (TrpG) and a large alpha subunit (TrpE).</text>
</comment>
<comment type="similarity">
    <text evidence="3">Belongs to the anthranilate synthase component I family.</text>
</comment>
<comment type="sequence caution" evidence="3">
    <conflict type="erroneous initiation">
        <sequence resource="EMBL-CDS" id="AAB02272"/>
    </conflict>
    <text>Truncated N-terminus.</text>
</comment>
<evidence type="ECO:0000250" key="1"/>
<evidence type="ECO:0000250" key="2">
    <source>
        <dbReference type="UniProtKB" id="P00897"/>
    </source>
</evidence>
<evidence type="ECO:0000305" key="3"/>
<protein>
    <recommendedName>
        <fullName>Anthranilate synthase component 1</fullName>
        <shortName>AS</shortName>
        <shortName>ASI</shortName>
        <ecNumber>4.1.3.27</ecNumber>
    </recommendedName>
</protein>
<sequence length="513" mass="58091">MNSQSNLTQFLKDSESYKTIPIVETITVDTLSPIQIVEKLKQDIVYLLESKDESSSWSRYSFIGLHPFLTLHDDQNKYIARDAAGQKLMQKQELKELLDWMKEQYQIKTPDIDIPFTGGAVGYLSYDLIPTLTSVRPHRSASTIENAHICLPTMIAFDHETNHVHFIQYTQLTGHETEDEKIRAYKEKQKQLEQMIHKLHSKVDMKELILSGNMNEPPSFEHVTSTYEKAQFLKDVEKIKEYIRAGDIFQGVLSQRFDIPVSVSSFELYRVLRIVNPSPYMYFMKLKDRDLVGSSPERLIHAKNGHLEIHPIAGTRKRGTTREEDAELARELLEDEKEKAEHYMLVDLARNDVGRVAEYGSVSVPTFTKVVNFSHVMHIISIVTGKLKRDTHPVDALMSAFPAGTLTGAPKIRAMQLLNEMEPEPRETYGGCIAYIGFDGNIDSCITIRTMSVKNHTASIQAGAGIVADSVPENEWEETCNKAGALLKAIQLAEHIFSEKESVQDESPTISSC</sequence>
<keyword id="KW-0028">Amino-acid biosynthesis</keyword>
<keyword id="KW-0057">Aromatic amino acid biosynthesis</keyword>
<keyword id="KW-0456">Lyase</keyword>
<keyword id="KW-0460">Magnesium</keyword>
<keyword id="KW-0479">Metal-binding</keyword>
<keyword id="KW-0822">Tryptophan biosynthesis</keyword>
<proteinExistence type="inferred from homology"/>
<name>TRPE_BACPU</name>
<gene>
    <name type="primary">trpE</name>
</gene>
<dbReference type="EC" id="4.1.3.27"/>
<dbReference type="EMBL" id="M36468">
    <property type="protein sequence ID" value="AAB02272.1"/>
    <property type="status" value="ALT_INIT"/>
    <property type="molecule type" value="Genomic_DNA"/>
</dbReference>
<dbReference type="PIR" id="JH0098">
    <property type="entry name" value="JH0098"/>
</dbReference>
<dbReference type="SMR" id="P18267"/>
<dbReference type="UniPathway" id="UPA00035">
    <property type="reaction ID" value="UER00040"/>
</dbReference>
<dbReference type="GO" id="GO:0004049">
    <property type="term" value="F:anthranilate synthase activity"/>
    <property type="evidence" value="ECO:0007669"/>
    <property type="project" value="UniProtKB-EC"/>
</dbReference>
<dbReference type="GO" id="GO:0046872">
    <property type="term" value="F:metal ion binding"/>
    <property type="evidence" value="ECO:0007669"/>
    <property type="project" value="UniProtKB-KW"/>
</dbReference>
<dbReference type="GO" id="GO:0000162">
    <property type="term" value="P:L-tryptophan biosynthetic process"/>
    <property type="evidence" value="ECO:0007669"/>
    <property type="project" value="UniProtKB-UniPathway"/>
</dbReference>
<dbReference type="Gene3D" id="3.60.120.10">
    <property type="entry name" value="Anthranilate synthase"/>
    <property type="match status" value="1"/>
</dbReference>
<dbReference type="InterPro" id="IPR005801">
    <property type="entry name" value="ADC_synthase"/>
</dbReference>
<dbReference type="InterPro" id="IPR019999">
    <property type="entry name" value="Anth_synth_I-like"/>
</dbReference>
<dbReference type="InterPro" id="IPR006805">
    <property type="entry name" value="Anth_synth_I_N"/>
</dbReference>
<dbReference type="InterPro" id="IPR005256">
    <property type="entry name" value="Anth_synth_I_PabB"/>
</dbReference>
<dbReference type="InterPro" id="IPR015890">
    <property type="entry name" value="Chorismate_C"/>
</dbReference>
<dbReference type="NCBIfam" id="TIGR00564">
    <property type="entry name" value="trpE_most"/>
    <property type="match status" value="1"/>
</dbReference>
<dbReference type="PANTHER" id="PTHR11236">
    <property type="entry name" value="AMINOBENZOATE/ANTHRANILATE SYNTHASE"/>
    <property type="match status" value="1"/>
</dbReference>
<dbReference type="PANTHER" id="PTHR11236:SF48">
    <property type="entry name" value="ISOCHORISMATE SYNTHASE MENF"/>
    <property type="match status" value="1"/>
</dbReference>
<dbReference type="Pfam" id="PF04715">
    <property type="entry name" value="Anth_synt_I_N"/>
    <property type="match status" value="1"/>
</dbReference>
<dbReference type="Pfam" id="PF00425">
    <property type="entry name" value="Chorismate_bind"/>
    <property type="match status" value="1"/>
</dbReference>
<dbReference type="PRINTS" id="PR00095">
    <property type="entry name" value="ANTSNTHASEI"/>
</dbReference>
<dbReference type="SUPFAM" id="SSF56322">
    <property type="entry name" value="ADC synthase"/>
    <property type="match status" value="1"/>
</dbReference>
<feature type="chain" id="PRO_0000154077" description="Anthranilate synthase component 1">
    <location>
        <begin position="1"/>
        <end position="513"/>
    </location>
</feature>
<feature type="binding site" evidence="2">
    <location>
        <position position="50"/>
    </location>
    <ligand>
        <name>L-tryptophan</name>
        <dbReference type="ChEBI" id="CHEBI:57912"/>
    </ligand>
</feature>
<feature type="binding site" evidence="2">
    <location>
        <begin position="279"/>
        <end position="281"/>
    </location>
    <ligand>
        <name>L-tryptophan</name>
        <dbReference type="ChEBI" id="CHEBI:57912"/>
    </ligand>
</feature>
<feature type="binding site" evidence="2">
    <location>
        <begin position="314"/>
        <end position="315"/>
    </location>
    <ligand>
        <name>chorismate</name>
        <dbReference type="ChEBI" id="CHEBI:29748"/>
    </ligand>
</feature>
<feature type="binding site" evidence="2">
    <location>
        <position position="341"/>
    </location>
    <ligand>
        <name>Mg(2+)</name>
        <dbReference type="ChEBI" id="CHEBI:18420"/>
    </ligand>
</feature>
<feature type="binding site" evidence="2">
    <location>
        <position position="429"/>
    </location>
    <ligand>
        <name>chorismate</name>
        <dbReference type="ChEBI" id="CHEBI:29748"/>
    </ligand>
</feature>
<feature type="binding site" evidence="2">
    <location>
        <position position="449"/>
    </location>
    <ligand>
        <name>chorismate</name>
        <dbReference type="ChEBI" id="CHEBI:29748"/>
    </ligand>
</feature>
<feature type="binding site" evidence="2">
    <location>
        <begin position="463"/>
        <end position="465"/>
    </location>
    <ligand>
        <name>chorismate</name>
        <dbReference type="ChEBI" id="CHEBI:29748"/>
    </ligand>
</feature>
<feature type="binding site" evidence="2">
    <location>
        <position position="465"/>
    </location>
    <ligand>
        <name>chorismate</name>
        <dbReference type="ChEBI" id="CHEBI:29748"/>
    </ligand>
</feature>
<feature type="binding site" evidence="2">
    <location>
        <position position="478"/>
    </location>
    <ligand>
        <name>Mg(2+)</name>
        <dbReference type="ChEBI" id="CHEBI:18420"/>
    </ligand>
</feature>